<protein>
    <recommendedName>
        <fullName>Arginine biosynthesis bifunctional protein ArgJ 1, mitochondrial</fullName>
    </recommendedName>
    <domain>
        <recommendedName>
            <fullName evidence="2">Glutamate N-acetyltransferase</fullName>
            <shortName evidence="2">GAT</shortName>
            <ecNumber evidence="2">2.3.1.35</ecNumber>
        </recommendedName>
        <alternativeName>
            <fullName evidence="2">Ornithine acetyltransferase</fullName>
            <shortName evidence="2">OATase</shortName>
        </alternativeName>
        <alternativeName>
            <fullName evidence="2">Ornithine transacetylase</fullName>
        </alternativeName>
    </domain>
    <domain>
        <recommendedName>
            <fullName evidence="2">Amino-acid acetyltransferase</fullName>
            <ecNumber evidence="2">2.3.1.1</ecNumber>
        </recommendedName>
        <alternativeName>
            <fullName evidence="2">N-acetylglutamate synthase</fullName>
            <shortName evidence="2">AGS</shortName>
        </alternativeName>
    </domain>
    <component>
        <recommendedName>
            <fullName>Arginine biosynthesis bifunctional protein ArgJ 1 alpha chain</fullName>
        </recommendedName>
    </component>
    <component>
        <recommendedName>
            <fullName>Arginine biosynthesis bifunctional protein ArgJ 1 beta chain</fullName>
        </recommendedName>
    </component>
</protein>
<proteinExistence type="inferred from homology"/>
<gene>
    <name type="ORF">SS1G_00621</name>
</gene>
<name>ARGJ1_SCLS1</name>
<evidence type="ECO:0000250" key="1"/>
<evidence type="ECO:0000255" key="2">
    <source>
        <dbReference type="HAMAP-Rule" id="MF_03124"/>
    </source>
</evidence>
<reference key="1">
    <citation type="journal article" date="2011" name="PLoS Genet.">
        <title>Genomic analysis of the necrotrophic fungal pathogens Sclerotinia sclerotiorum and Botrytis cinerea.</title>
        <authorList>
            <person name="Amselem J."/>
            <person name="Cuomo C.A."/>
            <person name="van Kan J.A.L."/>
            <person name="Viaud M."/>
            <person name="Benito E.P."/>
            <person name="Couloux A."/>
            <person name="Coutinho P.M."/>
            <person name="de Vries R.P."/>
            <person name="Dyer P.S."/>
            <person name="Fillinger S."/>
            <person name="Fournier E."/>
            <person name="Gout L."/>
            <person name="Hahn M."/>
            <person name="Kohn L."/>
            <person name="Lapalu N."/>
            <person name="Plummer K.M."/>
            <person name="Pradier J.-M."/>
            <person name="Quevillon E."/>
            <person name="Sharon A."/>
            <person name="Simon A."/>
            <person name="ten Have A."/>
            <person name="Tudzynski B."/>
            <person name="Tudzynski P."/>
            <person name="Wincker P."/>
            <person name="Andrew M."/>
            <person name="Anthouard V."/>
            <person name="Beever R.E."/>
            <person name="Beffa R."/>
            <person name="Benoit I."/>
            <person name="Bouzid O."/>
            <person name="Brault B."/>
            <person name="Chen Z."/>
            <person name="Choquer M."/>
            <person name="Collemare J."/>
            <person name="Cotton P."/>
            <person name="Danchin E.G."/>
            <person name="Da Silva C."/>
            <person name="Gautier A."/>
            <person name="Giraud C."/>
            <person name="Giraud T."/>
            <person name="Gonzalez C."/>
            <person name="Grossetete S."/>
            <person name="Gueldener U."/>
            <person name="Henrissat B."/>
            <person name="Howlett B.J."/>
            <person name="Kodira C."/>
            <person name="Kretschmer M."/>
            <person name="Lappartient A."/>
            <person name="Leroch M."/>
            <person name="Levis C."/>
            <person name="Mauceli E."/>
            <person name="Neuveglise C."/>
            <person name="Oeser B."/>
            <person name="Pearson M."/>
            <person name="Poulain J."/>
            <person name="Poussereau N."/>
            <person name="Quesneville H."/>
            <person name="Rascle C."/>
            <person name="Schumacher J."/>
            <person name="Segurens B."/>
            <person name="Sexton A."/>
            <person name="Silva E."/>
            <person name="Sirven C."/>
            <person name="Soanes D.M."/>
            <person name="Talbot N.J."/>
            <person name="Templeton M."/>
            <person name="Yandava C."/>
            <person name="Yarden O."/>
            <person name="Zeng Q."/>
            <person name="Rollins J.A."/>
            <person name="Lebrun M.-H."/>
            <person name="Dickman M."/>
        </authorList>
    </citation>
    <scope>NUCLEOTIDE SEQUENCE [LARGE SCALE GENOMIC DNA]</scope>
    <source>
        <strain>ATCC 18683 / 1980 / Ss-1</strain>
    </source>
</reference>
<comment type="function">
    <text evidence="2">Catalyzes two activities which are involved in the cyclic version of arginine biosynthesis: the synthesis of acetylglutamate from glutamate and acetyl-CoA, and of ornithine by transacetylation between acetylornithine and glutamate.</text>
</comment>
<comment type="catalytic activity">
    <reaction evidence="2">
        <text>N(2)-acetyl-L-ornithine + L-glutamate = N-acetyl-L-glutamate + L-ornithine</text>
        <dbReference type="Rhea" id="RHEA:15349"/>
        <dbReference type="ChEBI" id="CHEBI:29985"/>
        <dbReference type="ChEBI" id="CHEBI:44337"/>
        <dbReference type="ChEBI" id="CHEBI:46911"/>
        <dbReference type="ChEBI" id="CHEBI:57805"/>
        <dbReference type="EC" id="2.3.1.35"/>
    </reaction>
</comment>
<comment type="catalytic activity">
    <reaction evidence="2">
        <text>L-glutamate + acetyl-CoA = N-acetyl-L-glutamate + CoA + H(+)</text>
        <dbReference type="Rhea" id="RHEA:24292"/>
        <dbReference type="ChEBI" id="CHEBI:15378"/>
        <dbReference type="ChEBI" id="CHEBI:29985"/>
        <dbReference type="ChEBI" id="CHEBI:44337"/>
        <dbReference type="ChEBI" id="CHEBI:57287"/>
        <dbReference type="ChEBI" id="CHEBI:57288"/>
        <dbReference type="EC" id="2.3.1.1"/>
    </reaction>
</comment>
<comment type="pathway">
    <text evidence="2">Amino-acid biosynthesis; L-arginine biosynthesis; L-ornithine and N-acetyl-L-glutamate from L-glutamate and N(2)-acetyl-L-ornithine (cyclic): step 1/1.</text>
</comment>
<comment type="pathway">
    <text evidence="2">Amino-acid biosynthesis; L-arginine biosynthesis; N(2)-acetyl-L-ornithine from L-glutamate: step 1/4.</text>
</comment>
<comment type="subunit">
    <text evidence="2">Heterodimer of an alpha and a beta chain.</text>
</comment>
<comment type="subcellular location">
    <subcellularLocation>
        <location evidence="2">Mitochondrion matrix</location>
    </subcellularLocation>
</comment>
<comment type="PTM">
    <text evidence="2">The alpha and beta chains are autoproteolytically processed from a single precursor protein within the mitochondrion.</text>
</comment>
<comment type="miscellaneous">
    <text evidence="2">This protein may be expected to contain an N-terminal transit peptide but none has been predicted.</text>
</comment>
<comment type="similarity">
    <text evidence="2">Belongs to the ArgJ family.</text>
</comment>
<sequence length="419" mass="44219">MVINAGAKLSIARLIRPTASYHPAIGGIRYYSAPPESTIPAAKLKYIPTSGTYPQGFLVSGTYVGVKPTNKSTPDLAFLASEIPCAAAAVFTKNKFQAAPVTVSRKMLQRRENAGIRSVIINSGCANAVTGKGGMEDAEKMVAEADRCYHAPKDGKGGSSIVMSTGVIGQRMAGMTKGAGMIHPNMATLLGMIATDAPIAPALLPSLLKNAVDKSFNSISIDGDTSTNDTVAVLANGVAGGKEVTSESSKDHAAFQKVLTEFAIDLAKLVVRDGEGATKFVTIRVTEAPSEIGARKIASTIARSPLVKTALYGKDANWGRILCATGYSQISEPGEPINKVPEIVPEKTSVSFIPSDGSPELKLLVNGEPESVDETRAAEILEHEDLEILINLGGGKEEAVYWTCDFSHEYVTINGDYRT</sequence>
<keyword id="KW-0012">Acyltransferase</keyword>
<keyword id="KW-0028">Amino-acid biosynthesis</keyword>
<keyword id="KW-0055">Arginine biosynthesis</keyword>
<keyword id="KW-0068">Autocatalytic cleavage</keyword>
<keyword id="KW-0496">Mitochondrion</keyword>
<keyword id="KW-0511">Multifunctional enzyme</keyword>
<keyword id="KW-1185">Reference proteome</keyword>
<keyword id="KW-0808">Transferase</keyword>
<organism>
    <name type="scientific">Sclerotinia sclerotiorum (strain ATCC 18683 / 1980 / Ss-1)</name>
    <name type="common">White mold</name>
    <name type="synonym">Whetzelinia sclerotiorum</name>
    <dbReference type="NCBI Taxonomy" id="665079"/>
    <lineage>
        <taxon>Eukaryota</taxon>
        <taxon>Fungi</taxon>
        <taxon>Dikarya</taxon>
        <taxon>Ascomycota</taxon>
        <taxon>Pezizomycotina</taxon>
        <taxon>Leotiomycetes</taxon>
        <taxon>Helotiales</taxon>
        <taxon>Sclerotiniaceae</taxon>
        <taxon>Sclerotinia</taxon>
    </lineage>
</organism>
<dbReference type="EC" id="2.3.1.35" evidence="2"/>
<dbReference type="EC" id="2.3.1.1" evidence="2"/>
<dbReference type="EMBL" id="CH476621">
    <property type="protein sequence ID" value="EDN91218.1"/>
    <property type="molecule type" value="Genomic_DNA"/>
</dbReference>
<dbReference type="RefSeq" id="XP_001598532.1">
    <property type="nucleotide sequence ID" value="XM_001598482.1"/>
</dbReference>
<dbReference type="SMR" id="A7E5P6"/>
<dbReference type="FunCoup" id="A7E5P6">
    <property type="interactions" value="282"/>
</dbReference>
<dbReference type="STRING" id="665079.A7E5P6"/>
<dbReference type="MEROPS" id="T05.001"/>
<dbReference type="EnsemblFungi" id="EDN91218">
    <property type="protein sequence ID" value="EDN91218"/>
    <property type="gene ID" value="SS1G_00621"/>
</dbReference>
<dbReference type="GeneID" id="5494409"/>
<dbReference type="KEGG" id="ssl:SS1G_00621"/>
<dbReference type="eggNOG" id="KOG2786">
    <property type="taxonomic scope" value="Eukaryota"/>
</dbReference>
<dbReference type="HOGENOM" id="CLU_027172_1_0_1"/>
<dbReference type="InParanoid" id="A7E5P6"/>
<dbReference type="OMA" id="WGRIVMA"/>
<dbReference type="UniPathway" id="UPA00068">
    <property type="reaction ID" value="UER00106"/>
</dbReference>
<dbReference type="UniPathway" id="UPA00068">
    <property type="reaction ID" value="UER00111"/>
</dbReference>
<dbReference type="Proteomes" id="UP000001312">
    <property type="component" value="Unassembled WGS sequence"/>
</dbReference>
<dbReference type="GO" id="GO:0005759">
    <property type="term" value="C:mitochondrial matrix"/>
    <property type="evidence" value="ECO:0000318"/>
    <property type="project" value="GO_Central"/>
</dbReference>
<dbReference type="GO" id="GO:0004358">
    <property type="term" value="F:glutamate N-acetyltransferase activity"/>
    <property type="evidence" value="ECO:0007669"/>
    <property type="project" value="UniProtKB-UniRule"/>
</dbReference>
<dbReference type="GO" id="GO:0004042">
    <property type="term" value="F:L-glutamate N-acetyltransferase activity"/>
    <property type="evidence" value="ECO:0000318"/>
    <property type="project" value="GO_Central"/>
</dbReference>
<dbReference type="GO" id="GO:0006526">
    <property type="term" value="P:L-arginine biosynthetic process"/>
    <property type="evidence" value="ECO:0007669"/>
    <property type="project" value="UniProtKB-UniRule"/>
</dbReference>
<dbReference type="GO" id="GO:0006592">
    <property type="term" value="P:ornithine biosynthetic process"/>
    <property type="evidence" value="ECO:0000318"/>
    <property type="project" value="GO_Central"/>
</dbReference>
<dbReference type="CDD" id="cd02152">
    <property type="entry name" value="OAT"/>
    <property type="match status" value="1"/>
</dbReference>
<dbReference type="FunFam" id="3.60.70.12:FF:000011">
    <property type="entry name" value="Arginine biosynthesis bifunctional protein ArgJ 1, mitochondrial"/>
    <property type="match status" value="1"/>
</dbReference>
<dbReference type="FunFam" id="3.10.20.340:FF:000002">
    <property type="entry name" value="Arginine biosynthesis bifunctional protein ArgJ, mitochondrial"/>
    <property type="match status" value="1"/>
</dbReference>
<dbReference type="Gene3D" id="3.10.20.340">
    <property type="entry name" value="ArgJ beta chain, C-terminal domain"/>
    <property type="match status" value="1"/>
</dbReference>
<dbReference type="Gene3D" id="3.60.70.12">
    <property type="entry name" value="L-amino peptidase D-ALA esterase/amidase"/>
    <property type="match status" value="2"/>
</dbReference>
<dbReference type="HAMAP" id="MF_01106">
    <property type="entry name" value="ArgJ"/>
    <property type="match status" value="1"/>
</dbReference>
<dbReference type="InterPro" id="IPR002813">
    <property type="entry name" value="Arg_biosynth_ArgJ"/>
</dbReference>
<dbReference type="InterPro" id="IPR016117">
    <property type="entry name" value="ArgJ-like_dom_sf"/>
</dbReference>
<dbReference type="InterPro" id="IPR042195">
    <property type="entry name" value="ArgJ_beta_C"/>
</dbReference>
<dbReference type="PANTHER" id="PTHR23100">
    <property type="entry name" value="ARGININE BIOSYNTHESIS BIFUNCTIONAL PROTEIN ARGJ"/>
    <property type="match status" value="1"/>
</dbReference>
<dbReference type="PANTHER" id="PTHR23100:SF0">
    <property type="entry name" value="ARGININE BIOSYNTHESIS BIFUNCTIONAL PROTEIN ARGJ, MITOCHONDRIAL"/>
    <property type="match status" value="1"/>
</dbReference>
<dbReference type="Pfam" id="PF01960">
    <property type="entry name" value="ArgJ"/>
    <property type="match status" value="1"/>
</dbReference>
<dbReference type="SUPFAM" id="SSF56266">
    <property type="entry name" value="DmpA/ArgJ-like"/>
    <property type="match status" value="1"/>
</dbReference>
<accession>A7E5P6</accession>
<feature type="chain" id="PRO_0000398108" description="Arginine biosynthesis bifunctional protein ArgJ 1 alpha chain" evidence="1">
    <location>
        <begin position="1"/>
        <end position="187"/>
    </location>
</feature>
<feature type="chain" id="PRO_0000398109" description="Arginine biosynthesis bifunctional protein ArgJ 1 beta chain" evidence="1">
    <location>
        <begin position="188"/>
        <end position="419"/>
    </location>
</feature>
<feature type="active site" description="Nucleophile" evidence="2">
    <location>
        <position position="188"/>
    </location>
</feature>
<feature type="binding site" evidence="2">
    <location>
        <position position="177"/>
    </location>
    <ligand>
        <name>substrate</name>
    </ligand>
</feature>
<feature type="binding site" evidence="2">
    <location>
        <position position="188"/>
    </location>
    <ligand>
        <name>substrate</name>
    </ligand>
</feature>
<feature type="binding site" evidence="2">
    <location>
        <position position="275"/>
    </location>
    <ligand>
        <name>substrate</name>
    </ligand>
</feature>
<feature type="binding site" evidence="2">
    <location>
        <position position="414"/>
    </location>
    <ligand>
        <name>substrate</name>
    </ligand>
</feature>
<feature type="binding site" evidence="2">
    <location>
        <position position="419"/>
    </location>
    <ligand>
        <name>substrate</name>
    </ligand>
</feature>
<feature type="site" description="Involved in the stabilization of negative charge on the oxyanion by the formation of the oxyanion hole" evidence="2">
    <location>
        <position position="165"/>
    </location>
</feature>
<feature type="site" description="Involved in the stabilization of negative charge on the oxyanion by the formation of the oxyanion hole" evidence="2">
    <location>
        <position position="166"/>
    </location>
</feature>
<feature type="site" description="Cleavage; by autolysis" evidence="2">
    <location>
        <begin position="187"/>
        <end position="188"/>
    </location>
</feature>